<proteinExistence type="evidence at protein level"/>
<evidence type="ECO:0000250" key="1"/>
<evidence type="ECO:0000255" key="2"/>
<evidence type="ECO:0000269" key="3">
    <source>
    </source>
</evidence>
<evidence type="ECO:0000269" key="4">
    <source>
    </source>
</evidence>
<evidence type="ECO:0000269" key="5">
    <source>
    </source>
</evidence>
<evidence type="ECO:0000269" key="6">
    <source>
    </source>
</evidence>
<evidence type="ECO:0000269" key="7">
    <source>
    </source>
</evidence>
<evidence type="ECO:0000269" key="8">
    <source>
    </source>
</evidence>
<evidence type="ECO:0000269" key="9">
    <source>
    </source>
</evidence>
<evidence type="ECO:0000269" key="10">
    <source ref="13"/>
</evidence>
<evidence type="ECO:0000303" key="11">
    <source>
    </source>
</evidence>
<evidence type="ECO:0000305" key="12"/>
<evidence type="ECO:0000305" key="13">
    <source>
    </source>
</evidence>
<evidence type="ECO:0007744" key="14">
    <source>
        <dbReference type="PDB" id="7EAW"/>
    </source>
</evidence>
<evidence type="ECO:0007829" key="15">
    <source>
        <dbReference type="PDB" id="7E9X"/>
    </source>
</evidence>
<evidence type="ECO:0007829" key="16">
    <source>
        <dbReference type="PDB" id="7EAW"/>
    </source>
</evidence>
<dbReference type="EC" id="3.2.1.28" evidence="7"/>
<dbReference type="EMBL" id="AC002343">
    <property type="protein sequence ID" value="AAB63620.1"/>
    <property type="status" value="ALT_SEQ"/>
    <property type="molecule type" value="Genomic_DNA"/>
</dbReference>
<dbReference type="EMBL" id="AL109619">
    <property type="protein sequence ID" value="CAB51647.1"/>
    <property type="molecule type" value="Genomic_DNA"/>
</dbReference>
<dbReference type="EMBL" id="AL161560">
    <property type="protein sequence ID" value="CAB81322.1"/>
    <property type="molecule type" value="Genomic_DNA"/>
</dbReference>
<dbReference type="EMBL" id="CP002687">
    <property type="protein sequence ID" value="AEE84844.1"/>
    <property type="molecule type" value="Genomic_DNA"/>
</dbReference>
<dbReference type="EMBL" id="AK118407">
    <property type="protein sequence ID" value="BAC43016.1"/>
    <property type="molecule type" value="mRNA"/>
</dbReference>
<dbReference type="EMBL" id="BT010732">
    <property type="protein sequence ID" value="AAR23702.1"/>
    <property type="molecule type" value="mRNA"/>
</dbReference>
<dbReference type="PIR" id="T13444">
    <property type="entry name" value="T13444"/>
</dbReference>
<dbReference type="RefSeq" id="NP_194135.1">
    <molecule id="Q9SU50-1"/>
    <property type="nucleotide sequence ID" value="NM_118536.4"/>
</dbReference>
<dbReference type="PDB" id="7E9U">
    <property type="method" value="X-ray"/>
    <property type="resolution" value="2.10 A"/>
    <property type="chains" value="A/B=63-626"/>
</dbReference>
<dbReference type="PDB" id="7E9X">
    <property type="method" value="X-ray"/>
    <property type="resolution" value="1.88 A"/>
    <property type="chains" value="A/B/C/D=63-626"/>
</dbReference>
<dbReference type="PDB" id="7EAW">
    <property type="method" value="X-ray"/>
    <property type="resolution" value="1.80 A"/>
    <property type="chains" value="A/B=63-626"/>
</dbReference>
<dbReference type="PDBsum" id="7E9U"/>
<dbReference type="PDBsum" id="7E9X"/>
<dbReference type="PDBsum" id="7EAW"/>
<dbReference type="SMR" id="Q9SU50"/>
<dbReference type="FunCoup" id="Q9SU50">
    <property type="interactions" value="793"/>
</dbReference>
<dbReference type="STRING" id="3702.Q9SU50"/>
<dbReference type="CAZy" id="GH37">
    <property type="family name" value="Glycoside Hydrolase Family 37"/>
</dbReference>
<dbReference type="PaxDb" id="3702-AT4G24040.1"/>
<dbReference type="ProteomicsDB" id="228389"/>
<dbReference type="EnsemblPlants" id="AT4G24040.1">
    <molecule id="Q9SU50-1"/>
    <property type="protein sequence ID" value="AT4G24040.1"/>
    <property type="gene ID" value="AT4G24040"/>
</dbReference>
<dbReference type="GeneID" id="828504"/>
<dbReference type="Gramene" id="AT4G24040.1">
    <molecule id="Q9SU50-1"/>
    <property type="protein sequence ID" value="AT4G24040.1"/>
    <property type="gene ID" value="AT4G24040"/>
</dbReference>
<dbReference type="KEGG" id="ath:AT4G24040"/>
<dbReference type="Araport" id="AT4G24040"/>
<dbReference type="TAIR" id="AT4G24040">
    <property type="gene designation" value="TRE1"/>
</dbReference>
<dbReference type="eggNOG" id="KOG0602">
    <property type="taxonomic scope" value="Eukaryota"/>
</dbReference>
<dbReference type="HOGENOM" id="CLU_006451_4_2_1"/>
<dbReference type="InParanoid" id="Q9SU50"/>
<dbReference type="OMA" id="RYWDASD"/>
<dbReference type="PhylomeDB" id="Q9SU50"/>
<dbReference type="BRENDA" id="3.2.1.28">
    <property type="organism ID" value="399"/>
</dbReference>
<dbReference type="PRO" id="PR:Q9SU50"/>
<dbReference type="Proteomes" id="UP000006548">
    <property type="component" value="Chromosome 4"/>
</dbReference>
<dbReference type="ExpressionAtlas" id="Q9SU50">
    <property type="expression patterns" value="baseline and differential"/>
</dbReference>
<dbReference type="GO" id="GO:0005737">
    <property type="term" value="C:cytoplasm"/>
    <property type="evidence" value="ECO:0007669"/>
    <property type="project" value="UniProtKB-SubCell"/>
</dbReference>
<dbReference type="GO" id="GO:0005634">
    <property type="term" value="C:nucleus"/>
    <property type="evidence" value="ECO:0007669"/>
    <property type="project" value="UniProtKB-SubCell"/>
</dbReference>
<dbReference type="GO" id="GO:0005886">
    <property type="term" value="C:plasma membrane"/>
    <property type="evidence" value="ECO:0000314"/>
    <property type="project" value="TAIR"/>
</dbReference>
<dbReference type="GO" id="GO:0004555">
    <property type="term" value="F:alpha,alpha-trehalase activity"/>
    <property type="evidence" value="ECO:0000314"/>
    <property type="project" value="TAIR"/>
</dbReference>
<dbReference type="GO" id="GO:0005993">
    <property type="term" value="P:trehalose catabolic process"/>
    <property type="evidence" value="ECO:0000314"/>
    <property type="project" value="TAIR"/>
</dbReference>
<dbReference type="FunFam" id="1.50.10.10:FF:000003">
    <property type="entry name" value="Cytoplasmic trehalase"/>
    <property type="match status" value="1"/>
</dbReference>
<dbReference type="Gene3D" id="1.50.10.10">
    <property type="match status" value="1"/>
</dbReference>
<dbReference type="InterPro" id="IPR008928">
    <property type="entry name" value="6-hairpin_glycosidase_sf"/>
</dbReference>
<dbReference type="InterPro" id="IPR012341">
    <property type="entry name" value="6hp_glycosidase-like_sf"/>
</dbReference>
<dbReference type="InterPro" id="IPR001661">
    <property type="entry name" value="Glyco_hydro_37"/>
</dbReference>
<dbReference type="InterPro" id="IPR018232">
    <property type="entry name" value="Glyco_hydro_37_CS"/>
</dbReference>
<dbReference type="PANTHER" id="PTHR23403">
    <property type="entry name" value="TREHALASE"/>
    <property type="match status" value="1"/>
</dbReference>
<dbReference type="PANTHER" id="PTHR23403:SF1">
    <property type="entry name" value="TREHALASE"/>
    <property type="match status" value="1"/>
</dbReference>
<dbReference type="Pfam" id="PF01204">
    <property type="entry name" value="Trehalase"/>
    <property type="match status" value="1"/>
</dbReference>
<dbReference type="PRINTS" id="PR00744">
    <property type="entry name" value="GLHYDRLASE37"/>
</dbReference>
<dbReference type="SUPFAM" id="SSF48208">
    <property type="entry name" value="Six-hairpin glycosidases"/>
    <property type="match status" value="1"/>
</dbReference>
<dbReference type="PROSITE" id="PS00213">
    <property type="entry name" value="LIPOCALIN"/>
    <property type="match status" value="1"/>
</dbReference>
<dbReference type="PROSITE" id="PS00928">
    <property type="entry name" value="TREHALASE_2"/>
    <property type="match status" value="1"/>
</dbReference>
<feature type="chain" id="PRO_0000417663" description="Trehalase">
    <location>
        <begin position="1"/>
        <end position="626"/>
    </location>
</feature>
<feature type="transmembrane region" description="Helical" evidence="2">
    <location>
        <begin position="20"/>
        <end position="40"/>
    </location>
</feature>
<feature type="transmembrane region" description="Helical" evidence="2">
    <location>
        <begin position="45"/>
        <end position="65"/>
    </location>
</feature>
<feature type="active site" description="Proton donor/acceptor" evidence="1">
    <location>
        <position position="380"/>
    </location>
</feature>
<feature type="active site" description="Proton donor/acceptor" evidence="1">
    <location>
        <position position="580"/>
    </location>
</feature>
<feature type="binding site" evidence="10 14">
    <location>
        <position position="224"/>
    </location>
    <ligand>
        <name>alpha,alpha-trehalose</name>
        <dbReference type="ChEBI" id="CHEBI:16551"/>
    </ligand>
</feature>
<feature type="binding site" evidence="10 14">
    <location>
        <position position="232"/>
    </location>
    <ligand>
        <name>alpha,alpha-trehalose</name>
        <dbReference type="ChEBI" id="CHEBI:16551"/>
    </ligand>
</feature>
<feature type="binding site" evidence="10 14">
    <location>
        <position position="268"/>
    </location>
    <ligand>
        <name>alpha,alpha-trehalose</name>
        <dbReference type="ChEBI" id="CHEBI:16551"/>
    </ligand>
</feature>
<feature type="binding site" evidence="10 14">
    <location>
        <position position="277"/>
    </location>
    <ligand>
        <name>alpha,alpha-trehalose</name>
        <dbReference type="ChEBI" id="CHEBI:16551"/>
    </ligand>
</feature>
<feature type="binding site" evidence="10 14">
    <location>
        <position position="279"/>
    </location>
    <ligand>
        <name>alpha,alpha-trehalose</name>
        <dbReference type="ChEBI" id="CHEBI:16551"/>
    </ligand>
</feature>
<feature type="binding site" evidence="10 14">
    <location>
        <position position="344"/>
    </location>
    <ligand>
        <name>alpha,alpha-trehalose</name>
        <dbReference type="ChEBI" id="CHEBI:16551"/>
    </ligand>
</feature>
<feature type="binding site" evidence="10 14">
    <location>
        <position position="346"/>
    </location>
    <ligand>
        <name>alpha,alpha-trehalose</name>
        <dbReference type="ChEBI" id="CHEBI:16551"/>
    </ligand>
</feature>
<feature type="binding site" evidence="10 14">
    <location>
        <position position="580"/>
    </location>
    <ligand>
        <name>alpha,alpha-trehalose</name>
        <dbReference type="ChEBI" id="CHEBI:16551"/>
    </ligand>
</feature>
<feature type="binding site" evidence="10 14">
    <location>
        <position position="595"/>
    </location>
    <ligand>
        <name>alpha,alpha-trehalose</name>
        <dbReference type="ChEBI" id="CHEBI:16551"/>
    </ligand>
</feature>
<feature type="splice variant" id="VSP_062243" description="In isoform 2." evidence="9">
    <location>
        <begin position="1"/>
        <end position="61"/>
    </location>
</feature>
<feature type="mutagenesis site" description="Abolishes trehalase activity; when associated with A-126." evidence="9">
    <original>S</original>
    <variation>A</variation>
    <location>
        <position position="71"/>
    </location>
</feature>
<feature type="mutagenesis site" description="Abolishes trehalase activity; when associated with A-71." evidence="9">
    <original>T</original>
    <variation>A</variation>
    <location>
        <position position="128"/>
    </location>
</feature>
<feature type="helix" evidence="16">
    <location>
        <begin position="79"/>
        <end position="94"/>
    </location>
</feature>
<feature type="helix" evidence="15">
    <location>
        <begin position="97"/>
        <end position="99"/>
    </location>
</feature>
<feature type="helix" evidence="16">
    <location>
        <begin position="104"/>
        <end position="107"/>
    </location>
</feature>
<feature type="helix" evidence="16">
    <location>
        <begin position="117"/>
        <end position="128"/>
    </location>
</feature>
<feature type="helix" evidence="16">
    <location>
        <begin position="138"/>
        <end position="148"/>
    </location>
</feature>
<feature type="turn" evidence="16">
    <location>
        <begin position="152"/>
        <end position="155"/>
    </location>
</feature>
<feature type="strand" evidence="16">
    <location>
        <begin position="156"/>
        <end position="158"/>
    </location>
</feature>
<feature type="turn" evidence="16">
    <location>
        <begin position="169"/>
        <end position="174"/>
    </location>
</feature>
<feature type="helix" evidence="16">
    <location>
        <begin position="178"/>
        <end position="194"/>
    </location>
</feature>
<feature type="strand" evidence="16">
    <location>
        <begin position="195"/>
        <end position="198"/>
    </location>
</feature>
<feature type="helix" evidence="16">
    <location>
        <begin position="200"/>
        <end position="204"/>
    </location>
</feature>
<feature type="helix" evidence="16">
    <location>
        <begin position="206"/>
        <end position="208"/>
    </location>
</feature>
<feature type="strand" evidence="16">
    <location>
        <begin position="209"/>
        <end position="211"/>
    </location>
</feature>
<feature type="helix" evidence="16">
    <location>
        <begin position="232"/>
        <end position="242"/>
    </location>
</feature>
<feature type="helix" evidence="16">
    <location>
        <begin position="246"/>
        <end position="263"/>
    </location>
</feature>
<feature type="strand" evidence="16">
    <location>
        <begin position="268"/>
        <end position="271"/>
    </location>
</feature>
<feature type="helix" evidence="16">
    <location>
        <begin position="272"/>
        <end position="274"/>
    </location>
</feature>
<feature type="helix" evidence="16">
    <location>
        <begin position="283"/>
        <end position="294"/>
    </location>
</feature>
<feature type="helix" evidence="16">
    <location>
        <begin position="297"/>
        <end position="314"/>
    </location>
</feature>
<feature type="helix" evidence="16">
    <location>
        <begin position="317"/>
        <end position="319"/>
    </location>
</feature>
<feature type="strand" evidence="16">
    <location>
        <begin position="320"/>
        <end position="324"/>
    </location>
</feature>
<feature type="strand" evidence="16">
    <location>
        <begin position="330"/>
        <end position="334"/>
    </location>
</feature>
<feature type="helix" evidence="16">
    <location>
        <begin position="345"/>
        <end position="347"/>
    </location>
</feature>
<feature type="helix" evidence="16">
    <location>
        <begin position="348"/>
        <end position="355"/>
    </location>
</feature>
<feature type="helix" evidence="16">
    <location>
        <begin position="361"/>
        <end position="376"/>
    </location>
</feature>
<feature type="helix" evidence="16">
    <location>
        <begin position="383"/>
        <end position="385"/>
    </location>
</feature>
<feature type="strand" evidence="16">
    <location>
        <begin position="386"/>
        <end position="388"/>
    </location>
</feature>
<feature type="helix" evidence="16">
    <location>
        <begin position="392"/>
        <end position="394"/>
    </location>
</feature>
<feature type="helix" evidence="16">
    <location>
        <begin position="397"/>
        <end position="399"/>
    </location>
</feature>
<feature type="helix" evidence="16">
    <location>
        <begin position="403"/>
        <end position="423"/>
    </location>
</feature>
<feature type="helix" evidence="16">
    <location>
        <begin position="426"/>
        <end position="445"/>
    </location>
</feature>
<feature type="turn" evidence="16">
    <location>
        <begin position="450"/>
        <end position="453"/>
    </location>
</feature>
<feature type="strand" evidence="16">
    <location>
        <begin position="464"/>
        <end position="466"/>
    </location>
</feature>
<feature type="helix" evidence="16">
    <location>
        <begin position="472"/>
        <end position="474"/>
    </location>
</feature>
<feature type="helix" evidence="16">
    <location>
        <begin position="481"/>
        <end position="488"/>
    </location>
</feature>
<feature type="helix" evidence="16">
    <location>
        <begin position="490"/>
        <end position="493"/>
    </location>
</feature>
<feature type="helix" evidence="16">
    <location>
        <begin position="496"/>
        <end position="509"/>
    </location>
</feature>
<feature type="strand" evidence="16">
    <location>
        <begin position="519"/>
        <end position="521"/>
    </location>
</feature>
<feature type="strand" evidence="15">
    <location>
        <begin position="525"/>
        <end position="530"/>
    </location>
</feature>
<feature type="helix" evidence="16">
    <location>
        <begin position="535"/>
        <end position="547"/>
    </location>
</feature>
<feature type="helix" evidence="16">
    <location>
        <begin position="551"/>
        <end position="575"/>
    </location>
</feature>
<feature type="strand" evidence="16">
    <location>
        <begin position="579"/>
        <end position="583"/>
    </location>
</feature>
<feature type="strand" evidence="15">
    <location>
        <begin position="594"/>
        <end position="596"/>
    </location>
</feature>
<feature type="helix" evidence="16">
    <location>
        <begin position="603"/>
        <end position="616"/>
    </location>
</feature>
<gene>
    <name type="primary">TRE1</name>
    <name type="ordered locus">At4g24040</name>
    <name type="ORF">T19F6.15</name>
    <name type="ORF">T19F6.30</name>
</gene>
<sequence length="626" mass="71355">MKSYKLNNPNLLISTHTHNKLFLSSSPFNLLFSFPSFIYLKQQRSLFFFFFFFLCFSFTTSMLDSDTDTDSGPVVATTKLVTFLQRVQHTALRSYPKKQTPDPKSYIDLSLKRPYSLSTIESAFDDLTSESHDQPVPVETLEKFVKEYFDGAGEDLLHHEPVDFVSDPSGFLSNVENEEVREWAREVHGLWRNLSCRVSDSVRESADRHTLLPLPEPVIIPGSRFREVYYWDSYWVIKGLMTSQMFTTAKGLVTNLMSLVETYGYALNGARAYYTNRSQPPLLSSMVYEIYNVTKDEELVRKAIPLLLKEYEFWNSGKHKVVIRDANGYDHVLSRYYAMWNKPRPESSVFDEESASGFSTMLEKQRFHRDIATAAESGCDFSTRWMRDPPNFTTMATTSVVPVDLNVFLLKMELDIAFMMKVSGDQNGSDRFVKASKAREKAFQTVFWNEKAGQWLDYWLSSSGEESETWKAENQNTNVFASNFAPIWINSINSDENLVKKVVTALKNSGLIAPAGILTSLTNSGQQWDSPNGWAPQQEMIVTGLGRSSVKEAKEMAEDIARRWIKSNYLVYKKSGTIHEKLKVTELGEYGGGGEYMPQTGFGWSNGVILAFLEEYGWPSHLSIEA</sequence>
<comment type="function">
    <text evidence="3 5 7 8 9">Involved in the regulation of trehalose content by hydrolyzing trehalose to glucose (PubMed:11161063, PubMed:17673210, PubMed:21426427). May play a role in the regulation of abscisic acid-induced stomatal closure in response to drought stress (PubMed:23341362, PubMed:35088230).</text>
</comment>
<comment type="catalytic activity">
    <reaction evidence="7">
        <text>alpha,alpha-trehalose + H2O = alpha-D-glucose + beta-D-glucose</text>
        <dbReference type="Rhea" id="RHEA:32675"/>
        <dbReference type="ChEBI" id="CHEBI:15377"/>
        <dbReference type="ChEBI" id="CHEBI:15903"/>
        <dbReference type="ChEBI" id="CHEBI:16551"/>
        <dbReference type="ChEBI" id="CHEBI:17925"/>
        <dbReference type="EC" id="3.2.1.28"/>
    </reaction>
    <physiologicalReaction direction="left-to-right" evidence="13">
        <dbReference type="Rhea" id="RHEA:32676"/>
    </physiologicalReaction>
</comment>
<comment type="subunit">
    <text evidence="10">Forms homodimers.</text>
</comment>
<comment type="subcellular location">
    <molecule>Isoform 1</molecule>
    <subcellularLocation>
        <location evidence="5 9">Cell membrane</location>
        <topology evidence="2">Multi-pass membrane protein</topology>
    </subcellularLocation>
    <text evidence="5">Has extracellular activity when expressed in yeast.</text>
</comment>
<comment type="subcellular location">
    <molecule>Isoform 2</molecule>
    <subcellularLocation>
        <location>Cytoplasm</location>
    </subcellularLocation>
    <subcellularLocation>
        <location evidence="9">Nucleus</location>
    </subcellularLocation>
</comment>
<comment type="alternative products">
    <event type="alternative initiation"/>
    <isoform>
        <id>Q9SU50-1</id>
        <name>1</name>
        <name evidence="11">AtTRE1L</name>
        <sequence type="displayed"/>
    </isoform>
    <isoform>
        <id>Q9SU50-2</id>
        <name>2</name>
        <name evidence="11">AtTRE1S</name>
        <sequence type="described" ref="VSP_062243"/>
    </isoform>
</comment>
<comment type="tissue specificity">
    <text evidence="3 4 9">Highly expressed in flowers (PubMed:11161063, PubMed:15181208). Expressed at low levels in leaves and stems (PubMed:11161063, PubMed:15181208). Expressed in guard cells (PubMed:35088230).</text>
</comment>
<comment type="disruption phenotype">
    <text evidence="6 7 8">No visible phenotype under normal growth conditions, but plants accumulate high levels of trehalose and starch (PubMed:21394451, PubMed:21426427). Elevated trehalose contents and drought-susceptible phenotype (PubMed:23341362).</text>
</comment>
<comment type="miscellaneous">
    <text evidence="8">Plants overexpressing TRE1 exhibit increased tolerance to drought stress.</text>
</comment>
<comment type="similarity">
    <text evidence="12">Belongs to the glycosyl hydrolase 37 family.</text>
</comment>
<comment type="sequence caution" evidence="12">
    <conflict type="erroneous gene model prediction">
        <sequence resource="EMBL-CDS" id="AAB63620"/>
    </conflict>
</comment>
<keyword id="KW-0002">3D-structure</keyword>
<keyword id="KW-0024">Alternative initiation</keyword>
<keyword id="KW-1003">Cell membrane</keyword>
<keyword id="KW-0963">Cytoplasm</keyword>
<keyword id="KW-0326">Glycosidase</keyword>
<keyword id="KW-0378">Hydrolase</keyword>
<keyword id="KW-0472">Membrane</keyword>
<keyword id="KW-0539">Nucleus</keyword>
<keyword id="KW-1185">Reference proteome</keyword>
<keyword id="KW-0346">Stress response</keyword>
<keyword id="KW-0812">Transmembrane</keyword>
<keyword id="KW-1133">Transmembrane helix</keyword>
<organism>
    <name type="scientific">Arabidopsis thaliana</name>
    <name type="common">Mouse-ear cress</name>
    <dbReference type="NCBI Taxonomy" id="3702"/>
    <lineage>
        <taxon>Eukaryota</taxon>
        <taxon>Viridiplantae</taxon>
        <taxon>Streptophyta</taxon>
        <taxon>Embryophyta</taxon>
        <taxon>Tracheophyta</taxon>
        <taxon>Spermatophyta</taxon>
        <taxon>Magnoliopsida</taxon>
        <taxon>eudicotyledons</taxon>
        <taxon>Gunneridae</taxon>
        <taxon>Pentapetalae</taxon>
        <taxon>rosids</taxon>
        <taxon>malvids</taxon>
        <taxon>Brassicales</taxon>
        <taxon>Brassicaceae</taxon>
        <taxon>Camelineae</taxon>
        <taxon>Arabidopsis</taxon>
    </lineage>
</organism>
<protein>
    <recommendedName>
        <fullName>Trehalase</fullName>
        <ecNumber evidence="7">3.2.1.28</ecNumber>
    </recommendedName>
    <alternativeName>
        <fullName>Alpha,alpha-trehalase</fullName>
    </alternativeName>
    <alternativeName>
        <fullName>Alpha,alpha-trehalose glucohydrolase</fullName>
    </alternativeName>
    <alternativeName>
        <fullName>Trehalase 1</fullName>
        <shortName>AtTRE1</shortName>
    </alternativeName>
</protein>
<accession>Q9SU50</accession>
<accession>O22986</accession>
<reference key="1">
    <citation type="journal article" date="1999" name="Nature">
        <title>Sequence and analysis of chromosome 4 of the plant Arabidopsis thaliana.</title>
        <authorList>
            <person name="Mayer K.F.X."/>
            <person name="Schueller C."/>
            <person name="Wambutt R."/>
            <person name="Murphy G."/>
            <person name="Volckaert G."/>
            <person name="Pohl T."/>
            <person name="Duesterhoeft A."/>
            <person name="Stiekema W."/>
            <person name="Entian K.-D."/>
            <person name="Terryn N."/>
            <person name="Harris B."/>
            <person name="Ansorge W."/>
            <person name="Brandt P."/>
            <person name="Grivell L.A."/>
            <person name="Rieger M."/>
            <person name="Weichselgartner M."/>
            <person name="de Simone V."/>
            <person name="Obermaier B."/>
            <person name="Mache R."/>
            <person name="Mueller M."/>
            <person name="Kreis M."/>
            <person name="Delseny M."/>
            <person name="Puigdomenech P."/>
            <person name="Watson M."/>
            <person name="Schmidtheini T."/>
            <person name="Reichert B."/>
            <person name="Portetelle D."/>
            <person name="Perez-Alonso M."/>
            <person name="Boutry M."/>
            <person name="Bancroft I."/>
            <person name="Vos P."/>
            <person name="Hoheisel J."/>
            <person name="Zimmermann W."/>
            <person name="Wedler H."/>
            <person name="Ridley P."/>
            <person name="Langham S.-A."/>
            <person name="McCullagh B."/>
            <person name="Bilham L."/>
            <person name="Robben J."/>
            <person name="van der Schueren J."/>
            <person name="Grymonprez B."/>
            <person name="Chuang Y.-J."/>
            <person name="Vandenbussche F."/>
            <person name="Braeken M."/>
            <person name="Weltjens I."/>
            <person name="Voet M."/>
            <person name="Bastiaens I."/>
            <person name="Aert R."/>
            <person name="Defoor E."/>
            <person name="Weitzenegger T."/>
            <person name="Bothe G."/>
            <person name="Ramsperger U."/>
            <person name="Hilbert H."/>
            <person name="Braun M."/>
            <person name="Holzer E."/>
            <person name="Brandt A."/>
            <person name="Peters S."/>
            <person name="van Staveren M."/>
            <person name="Dirkse W."/>
            <person name="Mooijman P."/>
            <person name="Klein Lankhorst R."/>
            <person name="Rose M."/>
            <person name="Hauf J."/>
            <person name="Koetter P."/>
            <person name="Berneiser S."/>
            <person name="Hempel S."/>
            <person name="Feldpausch M."/>
            <person name="Lamberth S."/>
            <person name="Van den Daele H."/>
            <person name="De Keyser A."/>
            <person name="Buysshaert C."/>
            <person name="Gielen J."/>
            <person name="Villarroel R."/>
            <person name="De Clercq R."/>
            <person name="van Montagu M."/>
            <person name="Rogers J."/>
            <person name="Cronin A."/>
            <person name="Quail M.A."/>
            <person name="Bray-Allen S."/>
            <person name="Clark L."/>
            <person name="Doggett J."/>
            <person name="Hall S."/>
            <person name="Kay M."/>
            <person name="Lennard N."/>
            <person name="McLay K."/>
            <person name="Mayes R."/>
            <person name="Pettett A."/>
            <person name="Rajandream M.A."/>
            <person name="Lyne M."/>
            <person name="Benes V."/>
            <person name="Rechmann S."/>
            <person name="Borkova D."/>
            <person name="Bloecker H."/>
            <person name="Scharfe M."/>
            <person name="Grimm M."/>
            <person name="Loehnert T.-H."/>
            <person name="Dose S."/>
            <person name="de Haan M."/>
            <person name="Maarse A.C."/>
            <person name="Schaefer M."/>
            <person name="Mueller-Auer S."/>
            <person name="Gabel C."/>
            <person name="Fuchs M."/>
            <person name="Fartmann B."/>
            <person name="Granderath K."/>
            <person name="Dauner D."/>
            <person name="Herzl A."/>
            <person name="Neumann S."/>
            <person name="Argiriou A."/>
            <person name="Vitale D."/>
            <person name="Liguori R."/>
            <person name="Piravandi E."/>
            <person name="Massenet O."/>
            <person name="Quigley F."/>
            <person name="Clabauld G."/>
            <person name="Muendlein A."/>
            <person name="Felber R."/>
            <person name="Schnabl S."/>
            <person name="Hiller R."/>
            <person name="Schmidt W."/>
            <person name="Lecharny A."/>
            <person name="Aubourg S."/>
            <person name="Chefdor F."/>
            <person name="Cooke R."/>
            <person name="Berger C."/>
            <person name="Monfort A."/>
            <person name="Casacuberta E."/>
            <person name="Gibbons T."/>
            <person name="Weber N."/>
            <person name="Vandenbol M."/>
            <person name="Bargues M."/>
            <person name="Terol J."/>
            <person name="Torres A."/>
            <person name="Perez-Perez A."/>
            <person name="Purnelle B."/>
            <person name="Bent E."/>
            <person name="Johnson S."/>
            <person name="Tacon D."/>
            <person name="Jesse T."/>
            <person name="Heijnen L."/>
            <person name="Schwarz S."/>
            <person name="Scholler P."/>
            <person name="Heber S."/>
            <person name="Francs P."/>
            <person name="Bielke C."/>
            <person name="Frishman D."/>
            <person name="Haase D."/>
            <person name="Lemcke K."/>
            <person name="Mewes H.-W."/>
            <person name="Stocker S."/>
            <person name="Zaccaria P."/>
            <person name="Bevan M."/>
            <person name="Wilson R.K."/>
            <person name="de la Bastide M."/>
            <person name="Habermann K."/>
            <person name="Parnell L."/>
            <person name="Dedhia N."/>
            <person name="Gnoj L."/>
            <person name="Schutz K."/>
            <person name="Huang E."/>
            <person name="Spiegel L."/>
            <person name="Sekhon M."/>
            <person name="Murray J."/>
            <person name="Sheet P."/>
            <person name="Cordes M."/>
            <person name="Abu-Threideh J."/>
            <person name="Stoneking T."/>
            <person name="Kalicki J."/>
            <person name="Graves T."/>
            <person name="Harmon G."/>
            <person name="Edwards J."/>
            <person name="Latreille P."/>
            <person name="Courtney L."/>
            <person name="Cloud J."/>
            <person name="Abbott A."/>
            <person name="Scott K."/>
            <person name="Johnson D."/>
            <person name="Minx P."/>
            <person name="Bentley D."/>
            <person name="Fulton B."/>
            <person name="Miller N."/>
            <person name="Greco T."/>
            <person name="Kemp K."/>
            <person name="Kramer J."/>
            <person name="Fulton L."/>
            <person name="Mardis E."/>
            <person name="Dante M."/>
            <person name="Pepin K."/>
            <person name="Hillier L.W."/>
            <person name="Nelson J."/>
            <person name="Spieth J."/>
            <person name="Ryan E."/>
            <person name="Andrews S."/>
            <person name="Geisel C."/>
            <person name="Layman D."/>
            <person name="Du H."/>
            <person name="Ali J."/>
            <person name="Berghoff A."/>
            <person name="Jones K."/>
            <person name="Drone K."/>
            <person name="Cotton M."/>
            <person name="Joshu C."/>
            <person name="Antonoiu B."/>
            <person name="Zidanic M."/>
            <person name="Strong C."/>
            <person name="Sun H."/>
            <person name="Lamar B."/>
            <person name="Yordan C."/>
            <person name="Ma P."/>
            <person name="Zhong J."/>
            <person name="Preston R."/>
            <person name="Vil D."/>
            <person name="Shekher M."/>
            <person name="Matero A."/>
            <person name="Shah R."/>
            <person name="Swaby I.K."/>
            <person name="O'Shaughnessy A."/>
            <person name="Rodriguez M."/>
            <person name="Hoffman J."/>
            <person name="Till S."/>
            <person name="Granat S."/>
            <person name="Shohdy N."/>
            <person name="Hasegawa A."/>
            <person name="Hameed A."/>
            <person name="Lodhi M."/>
            <person name="Johnson A."/>
            <person name="Chen E."/>
            <person name="Marra M.A."/>
            <person name="Martienssen R."/>
            <person name="McCombie W.R."/>
        </authorList>
    </citation>
    <scope>NUCLEOTIDE SEQUENCE [LARGE SCALE GENOMIC DNA]</scope>
    <source>
        <strain>cv. Columbia</strain>
    </source>
</reference>
<reference key="2">
    <citation type="journal article" date="2017" name="Plant J.">
        <title>Araport11: a complete reannotation of the Arabidopsis thaliana reference genome.</title>
        <authorList>
            <person name="Cheng C.Y."/>
            <person name="Krishnakumar V."/>
            <person name="Chan A.P."/>
            <person name="Thibaud-Nissen F."/>
            <person name="Schobel S."/>
            <person name="Town C.D."/>
        </authorList>
    </citation>
    <scope>GENOME REANNOTATION</scope>
    <source>
        <strain>cv. Columbia</strain>
    </source>
</reference>
<reference key="3">
    <citation type="journal article" date="2002" name="Science">
        <title>Functional annotation of a full-length Arabidopsis cDNA collection.</title>
        <authorList>
            <person name="Seki M."/>
            <person name="Narusaka M."/>
            <person name="Kamiya A."/>
            <person name="Ishida J."/>
            <person name="Satou M."/>
            <person name="Sakurai T."/>
            <person name="Nakajima M."/>
            <person name="Enju A."/>
            <person name="Akiyama K."/>
            <person name="Oono Y."/>
            <person name="Muramatsu M."/>
            <person name="Hayashizaki Y."/>
            <person name="Kawai J."/>
            <person name="Carninci P."/>
            <person name="Itoh M."/>
            <person name="Ishii Y."/>
            <person name="Arakawa T."/>
            <person name="Shibata K."/>
            <person name="Shinagawa A."/>
            <person name="Shinozaki K."/>
        </authorList>
    </citation>
    <scope>NUCLEOTIDE SEQUENCE [LARGE SCALE MRNA]</scope>
    <source>
        <strain>cv. Columbia</strain>
    </source>
</reference>
<reference key="4">
    <citation type="submission" date="2003-11" db="EMBL/GenBank/DDBJ databases">
        <title>Arabidopsis cDNA clones.</title>
        <authorList>
            <person name="Cheuk R.F."/>
            <person name="Chen H."/>
            <person name="Kim C.J."/>
            <person name="Shinn P."/>
            <person name="Carninci P."/>
            <person name="Hayashizaki Y."/>
            <person name="Ishida J."/>
            <person name="Kamiya A."/>
            <person name="Kawai J."/>
            <person name="Narusaka M."/>
            <person name="Sakurai T."/>
            <person name="Satou M."/>
            <person name="Seki M."/>
            <person name="Shinozaki K."/>
            <person name="Ecker J.R."/>
        </authorList>
    </citation>
    <scope>NUCLEOTIDE SEQUENCE [LARGE SCALE MRNA]</scope>
</reference>
<reference key="5">
    <citation type="journal article" date="2001" name="Plant Physiol.">
        <title>Trehalose and trehalase in Arabidopsis.</title>
        <authorList>
            <person name="Mueller J."/>
            <person name="Aeschbacher R.A."/>
            <person name="Wingler A."/>
            <person name="Boller T."/>
            <person name="Wiemken A."/>
        </authorList>
    </citation>
    <scope>FUNCTION</scope>
    <scope>TISSUE SPECIFICITY</scope>
</reference>
<reference key="6">
    <citation type="journal article" date="2004" name="Plant Physiol.">
        <title>Trehalose mediated growth inhibition of Arabidopsis seedlings is due to trehalose-6-phosphate accumulation.</title>
        <authorList>
            <person name="Schluepmann H."/>
            <person name="van Dijken A.J.H."/>
            <person name="Aghdasi M."/>
            <person name="Wobbes B."/>
            <person name="Paul M."/>
            <person name="Smeekens S.C.M."/>
        </authorList>
    </citation>
    <scope>INDUCTION</scope>
</reference>
<reference key="7">
    <citation type="journal article" date="2004" name="Plant Physiol.">
        <title>Arabidopsis trehalose-6-phosphate synthase 1 is essential for normal vegetative growth and transition to flowering.</title>
        <authorList>
            <person name="van Dijken A.J.H."/>
            <person name="Schluepmann H."/>
            <person name="Smeekens S.C.M."/>
        </authorList>
    </citation>
    <scope>TISSUE SPECIFICITY</scope>
</reference>
<reference key="8">
    <citation type="journal article" date="2007" name="FEBS Lett.">
        <title>The Arabidopsis thaliana trehalase is a plasma membrane-bound enzyme with extracellular activity.</title>
        <authorList>
            <person name="Frison M."/>
            <person name="Parrou J.L."/>
            <person name="Guillaumot D."/>
            <person name="Masquelier D."/>
            <person name="Francois J."/>
            <person name="Chaumont F."/>
            <person name="Batoko H."/>
        </authorList>
    </citation>
    <scope>FUNCTION</scope>
    <scope>SUBCELLULAR LOCATION</scope>
</reference>
<reference key="9">
    <citation type="journal article" date="2011" name="Anal. Bioanal. Chem.">
        <title>Capillary electrophoresis-mass spectrometry analysis of trehalose-6-phosphate in Arabidopsis thaliana seedlings.</title>
        <authorList>
            <person name="Delatte T.L."/>
            <person name="Schluepmann H."/>
            <person name="Smeekens S.C."/>
            <person name="de Jong G.J."/>
            <person name="Somsen G.W."/>
        </authorList>
    </citation>
    <scope>DISRUPTION PHENOTYPE</scope>
</reference>
<reference key="10">
    <citation type="journal article" date="2011" name="Plant J.">
        <title>TREHALOSE PHOSPHATE SYNTHASE11-dependent trehalose metabolism promotes Arabidopsis thaliana defense against the phloem-feeding insect Myzus persicae.</title>
        <authorList>
            <person name="Singh V."/>
            <person name="Louis J."/>
            <person name="Ayre B.G."/>
            <person name="Reese J.C."/>
            <person name="Pegadaraju V."/>
            <person name="Shah J."/>
        </authorList>
    </citation>
    <scope>FUNCTION</scope>
    <scope>CATALYTIC ACTIVITY</scope>
    <scope>DISRUPTION PHENOTYPE</scope>
</reference>
<reference key="11">
    <citation type="journal article" date="2013" name="Plant Physiol.">
        <title>Overexpression of the trehalase gene AtTRE1 leads to increased drought stress tolerance in Arabidopsis and is involved in abscisic acid-induced stomatal closure.</title>
        <authorList>
            <person name="Van Houtte H."/>
            <person name="Vandesteene L."/>
            <person name="Lopez-Galvis L."/>
            <person name="Lemmens L."/>
            <person name="Kissel E."/>
            <person name="Carpentier S."/>
            <person name="Feil R."/>
            <person name="Avonce N."/>
            <person name="Beeckman T."/>
            <person name="Lunn J.E."/>
            <person name="Van Dijck P."/>
        </authorList>
    </citation>
    <scope>FUNCTION</scope>
    <scope>DISRUPTION PHENOTYPE</scope>
</reference>
<reference key="12">
    <citation type="journal article" date="2022" name="Plant Mol. Biol.">
        <title>Two trehalase isoforms, produced from a single transcript, regulate drought stress tolerance in Arabidopsis thaliana.</title>
        <authorList>
            <person name="Le Cong Huyen Bao Phan T."/>
            <person name="Crepin N."/>
            <person name="Rolland F."/>
            <person name="Van Dijck P."/>
        </authorList>
    </citation>
    <scope>FUNCTION</scope>
    <scope>SUBCELLULAR LOCATION</scope>
    <scope>TISSUE SPECIFICITY</scope>
    <scope>ALTERNATIVE INITIATION</scope>
    <scope>MUTAGENESIS OF SER-71 AND THR-128</scope>
</reference>
<reference key="13">
    <citation type="submission" date="2021-03" db="PDB data bank">
        <title>pH-dependent alteration of substrate specificity of plant trehalase and its molecular mechanism.</title>
        <authorList>
            <person name="Taguchi Y."/>
            <person name="Saburi W."/>
            <person name="Yu J."/>
            <person name="Imai R."/>
            <person name="Yao M."/>
            <person name="Mori H."/>
        </authorList>
    </citation>
    <scope>X-RAY CRYSTALLOGRAPHY (1.80 ANGSTROMS) OF 63-626 IN COMPLEX WITH TREHALOSE</scope>
    <scope>SUBUNIT</scope>
</reference>
<name>TRE1_ARATH</name>